<proteinExistence type="inferred from homology"/>
<protein>
    <recommendedName>
        <fullName evidence="1">Glutathione-regulated potassium-efflux system ancillary protein KefG</fullName>
    </recommendedName>
    <alternativeName>
        <fullName evidence="1">Putative quinone oxidoreductase KefG</fullName>
        <ecNumber evidence="1">1.6.5.2</ecNumber>
    </alternativeName>
</protein>
<comment type="function">
    <text evidence="1">Regulatory subunit of a potassium efflux system that confers protection against electrophiles. Required for full activity of KefB.</text>
</comment>
<comment type="catalytic activity">
    <reaction evidence="1">
        <text>a quinone + NADH + H(+) = a quinol + NAD(+)</text>
        <dbReference type="Rhea" id="RHEA:46160"/>
        <dbReference type="ChEBI" id="CHEBI:15378"/>
        <dbReference type="ChEBI" id="CHEBI:24646"/>
        <dbReference type="ChEBI" id="CHEBI:57540"/>
        <dbReference type="ChEBI" id="CHEBI:57945"/>
        <dbReference type="ChEBI" id="CHEBI:132124"/>
        <dbReference type="EC" id="1.6.5.2"/>
    </reaction>
</comment>
<comment type="catalytic activity">
    <reaction evidence="1">
        <text>a quinone + NADPH + H(+) = a quinol + NADP(+)</text>
        <dbReference type="Rhea" id="RHEA:46164"/>
        <dbReference type="ChEBI" id="CHEBI:15378"/>
        <dbReference type="ChEBI" id="CHEBI:24646"/>
        <dbReference type="ChEBI" id="CHEBI:57783"/>
        <dbReference type="ChEBI" id="CHEBI:58349"/>
        <dbReference type="ChEBI" id="CHEBI:132124"/>
        <dbReference type="EC" id="1.6.5.2"/>
    </reaction>
</comment>
<comment type="subunit">
    <text evidence="1">Interacts with KefB.</text>
</comment>
<comment type="subcellular location">
    <subcellularLocation>
        <location evidence="1">Cell inner membrane</location>
        <topology evidence="1">Peripheral membrane protein</topology>
        <orientation evidence="1">Cytoplasmic side</orientation>
    </subcellularLocation>
</comment>
<comment type="similarity">
    <text evidence="1">Belongs to the NAD(P)H dehydrogenase (quinone) family. KefG subfamily.</text>
</comment>
<comment type="sequence caution" evidence="2">
    <conflict type="erroneous initiation">
        <sequence resource="EMBL-CDS" id="BAB37625"/>
    </conflict>
    <text>Truncated N-terminus.</text>
</comment>
<feature type="chain" id="PRO_0000071643" description="Glutathione-regulated potassium-efflux system ancillary protein KefG">
    <location>
        <begin position="1"/>
        <end position="184"/>
    </location>
</feature>
<name>KEFG_ECO57</name>
<reference key="1">
    <citation type="journal article" date="2001" name="Nature">
        <title>Genome sequence of enterohaemorrhagic Escherichia coli O157:H7.</title>
        <authorList>
            <person name="Perna N.T."/>
            <person name="Plunkett G. III"/>
            <person name="Burland V."/>
            <person name="Mau B."/>
            <person name="Glasner J.D."/>
            <person name="Rose D.J."/>
            <person name="Mayhew G.F."/>
            <person name="Evans P.S."/>
            <person name="Gregor J."/>
            <person name="Kirkpatrick H.A."/>
            <person name="Posfai G."/>
            <person name="Hackett J."/>
            <person name="Klink S."/>
            <person name="Boutin A."/>
            <person name="Shao Y."/>
            <person name="Miller L."/>
            <person name="Grotbeck E.J."/>
            <person name="Davis N.W."/>
            <person name="Lim A."/>
            <person name="Dimalanta E.T."/>
            <person name="Potamousis K."/>
            <person name="Apodaca J."/>
            <person name="Anantharaman T.S."/>
            <person name="Lin J."/>
            <person name="Yen G."/>
            <person name="Schwartz D.C."/>
            <person name="Welch R.A."/>
            <person name="Blattner F.R."/>
        </authorList>
    </citation>
    <scope>NUCLEOTIDE SEQUENCE [LARGE SCALE GENOMIC DNA]</scope>
    <source>
        <strain>O157:H7 / EDL933 / ATCC 700927 / EHEC</strain>
    </source>
</reference>
<reference key="2">
    <citation type="journal article" date="2001" name="DNA Res.">
        <title>Complete genome sequence of enterohemorrhagic Escherichia coli O157:H7 and genomic comparison with a laboratory strain K-12.</title>
        <authorList>
            <person name="Hayashi T."/>
            <person name="Makino K."/>
            <person name="Ohnishi M."/>
            <person name="Kurokawa K."/>
            <person name="Ishii K."/>
            <person name="Yokoyama K."/>
            <person name="Han C.-G."/>
            <person name="Ohtsubo E."/>
            <person name="Nakayama K."/>
            <person name="Murata T."/>
            <person name="Tanaka M."/>
            <person name="Tobe T."/>
            <person name="Iida T."/>
            <person name="Takami H."/>
            <person name="Honda T."/>
            <person name="Sasakawa C."/>
            <person name="Ogasawara N."/>
            <person name="Yasunaga T."/>
            <person name="Kuhara S."/>
            <person name="Shiba T."/>
            <person name="Hattori M."/>
            <person name="Shinagawa H."/>
        </authorList>
    </citation>
    <scope>NUCLEOTIDE SEQUENCE [LARGE SCALE GENOMIC DNA]</scope>
    <source>
        <strain>O157:H7 / Sakai / RIMD 0509952 / EHEC</strain>
    </source>
</reference>
<organism>
    <name type="scientific">Escherichia coli O157:H7</name>
    <dbReference type="NCBI Taxonomy" id="83334"/>
    <lineage>
        <taxon>Bacteria</taxon>
        <taxon>Pseudomonadati</taxon>
        <taxon>Pseudomonadota</taxon>
        <taxon>Gammaproteobacteria</taxon>
        <taxon>Enterobacterales</taxon>
        <taxon>Enterobacteriaceae</taxon>
        <taxon>Escherichia</taxon>
    </lineage>
</organism>
<sequence length="184" mass="20958">MMSQPAKVLLLYAHPESQDSVANRVLLKPATQLSNVTVHDLYAHYPDFFIDIPREQALLREHEVIVFQHPLYTYSCPALLKEWLDRVLSRGFASGPGGNQLAGKYWRSVITTGEPESAYRYDALNRYPMSDVLRPFELAAGMCRMHWLSPIIIYWARRQSAQELASHARAYGDWLANPLSPGGR</sequence>
<evidence type="ECO:0000255" key="1">
    <source>
        <dbReference type="HAMAP-Rule" id="MF_01415"/>
    </source>
</evidence>
<evidence type="ECO:0000305" key="2"/>
<accession>P0A758</accession>
<accession>P45534</accession>
<dbReference type="EC" id="1.6.5.2" evidence="1"/>
<dbReference type="EMBL" id="AE005174">
    <property type="protein sequence ID" value="AAG58459.1"/>
    <property type="molecule type" value="Genomic_DNA"/>
</dbReference>
<dbReference type="EMBL" id="BA000007">
    <property type="protein sequence ID" value="BAB37625.2"/>
    <property type="status" value="ALT_INIT"/>
    <property type="molecule type" value="Genomic_DNA"/>
</dbReference>
<dbReference type="PIR" id="B91154">
    <property type="entry name" value="B91154"/>
</dbReference>
<dbReference type="RefSeq" id="NP_312229.1">
    <property type="nucleotide sequence ID" value="NC_002695.1"/>
</dbReference>
<dbReference type="SMR" id="P0A758"/>
<dbReference type="STRING" id="155864.Z4712"/>
<dbReference type="GeneID" id="915943"/>
<dbReference type="KEGG" id="ece:Z4712"/>
<dbReference type="KEGG" id="ecs:ECs_4202"/>
<dbReference type="PATRIC" id="fig|386585.9.peg.4386"/>
<dbReference type="eggNOG" id="COG2249">
    <property type="taxonomic scope" value="Bacteria"/>
</dbReference>
<dbReference type="HOGENOM" id="CLU_058643_0_1_6"/>
<dbReference type="OMA" id="RYPMSDI"/>
<dbReference type="Proteomes" id="UP000000558">
    <property type="component" value="Chromosome"/>
</dbReference>
<dbReference type="Proteomes" id="UP000002519">
    <property type="component" value="Chromosome"/>
</dbReference>
<dbReference type="GO" id="GO:0005886">
    <property type="term" value="C:plasma membrane"/>
    <property type="evidence" value="ECO:0007669"/>
    <property type="project" value="UniProtKB-SubCell"/>
</dbReference>
<dbReference type="GO" id="GO:0009055">
    <property type="term" value="F:electron transfer activity"/>
    <property type="evidence" value="ECO:0007669"/>
    <property type="project" value="TreeGrafter"/>
</dbReference>
<dbReference type="GO" id="GO:0010181">
    <property type="term" value="F:FMN binding"/>
    <property type="evidence" value="ECO:0007669"/>
    <property type="project" value="TreeGrafter"/>
</dbReference>
<dbReference type="GO" id="GO:0050136">
    <property type="term" value="F:NADH:ubiquinone reductase (non-electrogenic) activity"/>
    <property type="evidence" value="ECO:0007669"/>
    <property type="project" value="RHEA"/>
</dbReference>
<dbReference type="GO" id="GO:0008753">
    <property type="term" value="F:NADPH dehydrogenase (quinone) activity"/>
    <property type="evidence" value="ECO:0007669"/>
    <property type="project" value="RHEA"/>
</dbReference>
<dbReference type="GO" id="GO:1901381">
    <property type="term" value="P:positive regulation of potassium ion transmembrane transport"/>
    <property type="evidence" value="ECO:0007669"/>
    <property type="project" value="UniProtKB-UniRule"/>
</dbReference>
<dbReference type="GO" id="GO:0006813">
    <property type="term" value="P:potassium ion transport"/>
    <property type="evidence" value="ECO:0007669"/>
    <property type="project" value="InterPro"/>
</dbReference>
<dbReference type="FunFam" id="3.40.50.360:FF:000013">
    <property type="entry name" value="Glutathione-regulated potassium-efflux system ancillary protein KefG"/>
    <property type="match status" value="1"/>
</dbReference>
<dbReference type="Gene3D" id="3.40.50.360">
    <property type="match status" value="1"/>
</dbReference>
<dbReference type="HAMAP" id="MF_01415">
    <property type="entry name" value="K_H_efflux_KefG"/>
    <property type="match status" value="1"/>
</dbReference>
<dbReference type="InterPro" id="IPR003680">
    <property type="entry name" value="Flavodoxin_fold"/>
</dbReference>
<dbReference type="InterPro" id="IPR029039">
    <property type="entry name" value="Flavoprotein-like_sf"/>
</dbReference>
<dbReference type="InterPro" id="IPR023947">
    <property type="entry name" value="K_H_efflux_KefG"/>
</dbReference>
<dbReference type="InterPro" id="IPR046980">
    <property type="entry name" value="KefG/KefF"/>
</dbReference>
<dbReference type="NCBIfam" id="NF003430">
    <property type="entry name" value="PRK04930.1"/>
    <property type="match status" value="1"/>
</dbReference>
<dbReference type="PANTHER" id="PTHR47307">
    <property type="entry name" value="GLUTATHIONE-REGULATED POTASSIUM-EFFLUX SYSTEM ANCILLARY PROTEIN KEFG"/>
    <property type="match status" value="1"/>
</dbReference>
<dbReference type="PANTHER" id="PTHR47307:SF1">
    <property type="entry name" value="GLUTATHIONE-REGULATED POTASSIUM-EFFLUX SYSTEM ANCILLARY PROTEIN KEFG"/>
    <property type="match status" value="1"/>
</dbReference>
<dbReference type="Pfam" id="PF02525">
    <property type="entry name" value="Flavodoxin_2"/>
    <property type="match status" value="1"/>
</dbReference>
<dbReference type="SUPFAM" id="SSF52218">
    <property type="entry name" value="Flavoproteins"/>
    <property type="match status" value="1"/>
</dbReference>
<gene>
    <name evidence="1" type="primary">kefG</name>
    <name type="ordered locus">Z4712</name>
    <name type="ordered locus">ECs4202</name>
</gene>
<keyword id="KW-0997">Cell inner membrane</keyword>
<keyword id="KW-1003">Cell membrane</keyword>
<keyword id="KW-0472">Membrane</keyword>
<keyword id="KW-0520">NAD</keyword>
<keyword id="KW-0560">Oxidoreductase</keyword>
<keyword id="KW-1185">Reference proteome</keyword>